<gene>
    <name evidence="1" type="primary">obg</name>
    <name type="ordered locus">Pro_0246</name>
</gene>
<proteinExistence type="inferred from homology"/>
<accession>Q7VDW9</accession>
<evidence type="ECO:0000255" key="1">
    <source>
        <dbReference type="HAMAP-Rule" id="MF_01454"/>
    </source>
</evidence>
<evidence type="ECO:0000255" key="2">
    <source>
        <dbReference type="PROSITE-ProRule" id="PRU01231"/>
    </source>
</evidence>
<comment type="function">
    <text evidence="1">An essential GTPase which binds GTP, GDP and possibly (p)ppGpp with moderate affinity, with high nucleotide exchange rates and a fairly low GTP hydrolysis rate. Plays a role in control of the cell cycle, stress response, ribosome biogenesis and in those bacteria that undergo differentiation, in morphogenesis control.</text>
</comment>
<comment type="cofactor">
    <cofactor evidence="1">
        <name>Mg(2+)</name>
        <dbReference type="ChEBI" id="CHEBI:18420"/>
    </cofactor>
</comment>
<comment type="subunit">
    <text evidence="1">Monomer.</text>
</comment>
<comment type="subcellular location">
    <subcellularLocation>
        <location evidence="1">Cytoplasm</location>
    </subcellularLocation>
</comment>
<comment type="similarity">
    <text evidence="1">Belongs to the TRAFAC class OBG-HflX-like GTPase superfamily. OBG GTPase family.</text>
</comment>
<feature type="chain" id="PRO_0000386131" description="GTPase Obg">
    <location>
        <begin position="1"/>
        <end position="329"/>
    </location>
</feature>
<feature type="domain" description="Obg" evidence="2">
    <location>
        <begin position="1"/>
        <end position="159"/>
    </location>
</feature>
<feature type="domain" description="OBG-type G" evidence="1">
    <location>
        <begin position="160"/>
        <end position="328"/>
    </location>
</feature>
<feature type="binding site" evidence="1">
    <location>
        <begin position="166"/>
        <end position="173"/>
    </location>
    <ligand>
        <name>ATP</name>
        <dbReference type="ChEBI" id="CHEBI:30616"/>
    </ligand>
</feature>
<feature type="binding site" evidence="1">
    <location>
        <position position="173"/>
    </location>
    <ligand>
        <name>Mg(2+)</name>
        <dbReference type="ChEBI" id="CHEBI:18420"/>
    </ligand>
</feature>
<feature type="binding site" evidence="1">
    <location>
        <begin position="191"/>
        <end position="195"/>
    </location>
    <ligand>
        <name>ATP</name>
        <dbReference type="ChEBI" id="CHEBI:30616"/>
    </ligand>
</feature>
<feature type="binding site" evidence="1">
    <location>
        <position position="193"/>
    </location>
    <ligand>
        <name>Mg(2+)</name>
        <dbReference type="ChEBI" id="CHEBI:18420"/>
    </ligand>
</feature>
<feature type="binding site" evidence="1">
    <location>
        <begin position="213"/>
        <end position="216"/>
    </location>
    <ligand>
        <name>ATP</name>
        <dbReference type="ChEBI" id="CHEBI:30616"/>
    </ligand>
</feature>
<feature type="binding site" evidence="1">
    <location>
        <begin position="280"/>
        <end position="283"/>
    </location>
    <ligand>
        <name>ATP</name>
        <dbReference type="ChEBI" id="CHEBI:30616"/>
    </ligand>
</feature>
<feature type="binding site" evidence="1">
    <location>
        <begin position="309"/>
        <end position="311"/>
    </location>
    <ligand>
        <name>ATP</name>
        <dbReference type="ChEBI" id="CHEBI:30616"/>
    </ligand>
</feature>
<reference key="1">
    <citation type="journal article" date="2003" name="Proc. Natl. Acad. Sci. U.S.A.">
        <title>Genome sequence of the cyanobacterium Prochlorococcus marinus SS120, a nearly minimal oxyphototrophic genome.</title>
        <authorList>
            <person name="Dufresne A."/>
            <person name="Salanoubat M."/>
            <person name="Partensky F."/>
            <person name="Artiguenave F."/>
            <person name="Axmann I.M."/>
            <person name="Barbe V."/>
            <person name="Duprat S."/>
            <person name="Galperin M.Y."/>
            <person name="Koonin E.V."/>
            <person name="Le Gall F."/>
            <person name="Makarova K.S."/>
            <person name="Ostrowski M."/>
            <person name="Oztas S."/>
            <person name="Robert C."/>
            <person name="Rogozin I.B."/>
            <person name="Scanlan D.J."/>
            <person name="Tandeau de Marsac N."/>
            <person name="Weissenbach J."/>
            <person name="Wincker P."/>
            <person name="Wolf Y.I."/>
            <person name="Hess W.R."/>
        </authorList>
    </citation>
    <scope>NUCLEOTIDE SEQUENCE [LARGE SCALE GENOMIC DNA]</scope>
    <source>
        <strain>SARG / CCMP1375 / SS120</strain>
    </source>
</reference>
<protein>
    <recommendedName>
        <fullName evidence="1">GTPase Obg</fullName>
        <ecNumber evidence="1">3.6.5.-</ecNumber>
    </recommendedName>
    <alternativeName>
        <fullName evidence="1">GTP-binding protein Obg</fullName>
    </alternativeName>
</protein>
<name>OBG_PROMA</name>
<sequence>MQFIDQARITVKAGRGGDGIVAFRREKYVPAGGPSGGDGGNGGNVVFQADSNLQTLLDFKFKQIILAENGRRGGPNKCTGASGNNIVLKVPCGTEVRHLETGIIFGDLTIDGESLVVAFGGIGGLGNAHYLSNRNRAPEKFTEGKDGEEWLLHLELKLLAEVGIIGLPNAGKSTLISVLSSARPKIADYPFTTLIPNLGVVRKPSGDGTVFADIPGLIEGAAEGIGLGHEFLRHIERTRLLIHLVDASALNPLEDIEIVENELSAYGHSLIDRPRILVLNKKELLDAKNLKKLERKLNQGSISEVISISAIMSNGLDILLNKIWSKLEI</sequence>
<keyword id="KW-0067">ATP-binding</keyword>
<keyword id="KW-0963">Cytoplasm</keyword>
<keyword id="KW-0342">GTP-binding</keyword>
<keyword id="KW-0378">Hydrolase</keyword>
<keyword id="KW-0460">Magnesium</keyword>
<keyword id="KW-0479">Metal-binding</keyword>
<keyword id="KW-0547">Nucleotide-binding</keyword>
<keyword id="KW-1185">Reference proteome</keyword>
<dbReference type="EC" id="3.6.5.-" evidence="1"/>
<dbReference type="EMBL" id="AE017126">
    <property type="protein sequence ID" value="AAP99292.1"/>
    <property type="molecule type" value="Genomic_DNA"/>
</dbReference>
<dbReference type="RefSeq" id="NP_874640.1">
    <property type="nucleotide sequence ID" value="NC_005042.1"/>
</dbReference>
<dbReference type="SMR" id="Q7VDW9"/>
<dbReference type="STRING" id="167539.Pro_0246"/>
<dbReference type="EnsemblBacteria" id="AAP99292">
    <property type="protein sequence ID" value="AAP99292"/>
    <property type="gene ID" value="Pro_0246"/>
</dbReference>
<dbReference type="KEGG" id="pma:Pro_0246"/>
<dbReference type="PATRIC" id="fig|167539.5.peg.254"/>
<dbReference type="eggNOG" id="COG0536">
    <property type="taxonomic scope" value="Bacteria"/>
</dbReference>
<dbReference type="HOGENOM" id="CLU_011747_2_3_3"/>
<dbReference type="OrthoDB" id="9807318at2"/>
<dbReference type="Proteomes" id="UP000001420">
    <property type="component" value="Chromosome"/>
</dbReference>
<dbReference type="GO" id="GO:0005737">
    <property type="term" value="C:cytoplasm"/>
    <property type="evidence" value="ECO:0007669"/>
    <property type="project" value="UniProtKB-SubCell"/>
</dbReference>
<dbReference type="GO" id="GO:0005524">
    <property type="term" value="F:ATP binding"/>
    <property type="evidence" value="ECO:0007669"/>
    <property type="project" value="UniProtKB-KW"/>
</dbReference>
<dbReference type="GO" id="GO:0005525">
    <property type="term" value="F:GTP binding"/>
    <property type="evidence" value="ECO:0007669"/>
    <property type="project" value="UniProtKB-UniRule"/>
</dbReference>
<dbReference type="GO" id="GO:0003924">
    <property type="term" value="F:GTPase activity"/>
    <property type="evidence" value="ECO:0007669"/>
    <property type="project" value="UniProtKB-UniRule"/>
</dbReference>
<dbReference type="GO" id="GO:0000287">
    <property type="term" value="F:magnesium ion binding"/>
    <property type="evidence" value="ECO:0007669"/>
    <property type="project" value="InterPro"/>
</dbReference>
<dbReference type="GO" id="GO:0042254">
    <property type="term" value="P:ribosome biogenesis"/>
    <property type="evidence" value="ECO:0007669"/>
    <property type="project" value="UniProtKB-UniRule"/>
</dbReference>
<dbReference type="CDD" id="cd01898">
    <property type="entry name" value="Obg"/>
    <property type="match status" value="1"/>
</dbReference>
<dbReference type="FunFam" id="2.70.210.12:FF:000001">
    <property type="entry name" value="GTPase Obg"/>
    <property type="match status" value="1"/>
</dbReference>
<dbReference type="Gene3D" id="2.70.210.12">
    <property type="entry name" value="GTP1/OBG domain"/>
    <property type="match status" value="1"/>
</dbReference>
<dbReference type="Gene3D" id="3.40.50.300">
    <property type="entry name" value="P-loop containing nucleotide triphosphate hydrolases"/>
    <property type="match status" value="1"/>
</dbReference>
<dbReference type="HAMAP" id="MF_01454">
    <property type="entry name" value="GTPase_Obg"/>
    <property type="match status" value="1"/>
</dbReference>
<dbReference type="InterPro" id="IPR031167">
    <property type="entry name" value="G_OBG"/>
</dbReference>
<dbReference type="InterPro" id="IPR006073">
    <property type="entry name" value="GTP-bd"/>
</dbReference>
<dbReference type="InterPro" id="IPR014100">
    <property type="entry name" value="GTP-bd_Obg/CgtA"/>
</dbReference>
<dbReference type="InterPro" id="IPR006074">
    <property type="entry name" value="GTP1-OBG_CS"/>
</dbReference>
<dbReference type="InterPro" id="IPR006169">
    <property type="entry name" value="GTP1_OBG_dom"/>
</dbReference>
<dbReference type="InterPro" id="IPR036726">
    <property type="entry name" value="GTP1_OBG_dom_sf"/>
</dbReference>
<dbReference type="InterPro" id="IPR045086">
    <property type="entry name" value="OBG_GTPase"/>
</dbReference>
<dbReference type="InterPro" id="IPR027417">
    <property type="entry name" value="P-loop_NTPase"/>
</dbReference>
<dbReference type="NCBIfam" id="TIGR02729">
    <property type="entry name" value="Obg_CgtA"/>
    <property type="match status" value="1"/>
</dbReference>
<dbReference type="NCBIfam" id="NF008955">
    <property type="entry name" value="PRK12297.1"/>
    <property type="match status" value="1"/>
</dbReference>
<dbReference type="NCBIfam" id="NF008956">
    <property type="entry name" value="PRK12299.1"/>
    <property type="match status" value="1"/>
</dbReference>
<dbReference type="PANTHER" id="PTHR11702">
    <property type="entry name" value="DEVELOPMENTALLY REGULATED GTP-BINDING PROTEIN-RELATED"/>
    <property type="match status" value="1"/>
</dbReference>
<dbReference type="PANTHER" id="PTHR11702:SF31">
    <property type="entry name" value="MITOCHONDRIAL RIBOSOME-ASSOCIATED GTPASE 2"/>
    <property type="match status" value="1"/>
</dbReference>
<dbReference type="Pfam" id="PF01018">
    <property type="entry name" value="GTP1_OBG"/>
    <property type="match status" value="1"/>
</dbReference>
<dbReference type="Pfam" id="PF01926">
    <property type="entry name" value="MMR_HSR1"/>
    <property type="match status" value="1"/>
</dbReference>
<dbReference type="PIRSF" id="PIRSF002401">
    <property type="entry name" value="GTP_bd_Obg/CgtA"/>
    <property type="match status" value="1"/>
</dbReference>
<dbReference type="PRINTS" id="PR00326">
    <property type="entry name" value="GTP1OBG"/>
</dbReference>
<dbReference type="SUPFAM" id="SSF82051">
    <property type="entry name" value="Obg GTP-binding protein N-terminal domain"/>
    <property type="match status" value="1"/>
</dbReference>
<dbReference type="SUPFAM" id="SSF52540">
    <property type="entry name" value="P-loop containing nucleoside triphosphate hydrolases"/>
    <property type="match status" value="1"/>
</dbReference>
<dbReference type="PROSITE" id="PS51710">
    <property type="entry name" value="G_OBG"/>
    <property type="match status" value="1"/>
</dbReference>
<dbReference type="PROSITE" id="PS00905">
    <property type="entry name" value="GTP1_OBG"/>
    <property type="match status" value="1"/>
</dbReference>
<dbReference type="PROSITE" id="PS51883">
    <property type="entry name" value="OBG"/>
    <property type="match status" value="1"/>
</dbReference>
<organism>
    <name type="scientific">Prochlorococcus marinus (strain SARG / CCMP1375 / SS120)</name>
    <dbReference type="NCBI Taxonomy" id="167539"/>
    <lineage>
        <taxon>Bacteria</taxon>
        <taxon>Bacillati</taxon>
        <taxon>Cyanobacteriota</taxon>
        <taxon>Cyanophyceae</taxon>
        <taxon>Synechococcales</taxon>
        <taxon>Prochlorococcaceae</taxon>
        <taxon>Prochlorococcus</taxon>
    </lineage>
</organism>